<organism>
    <name type="scientific">Shouchella clausii (strain KSM-K16)</name>
    <name type="common">Alkalihalobacillus clausii</name>
    <dbReference type="NCBI Taxonomy" id="66692"/>
    <lineage>
        <taxon>Bacteria</taxon>
        <taxon>Bacillati</taxon>
        <taxon>Bacillota</taxon>
        <taxon>Bacilli</taxon>
        <taxon>Bacillales</taxon>
        <taxon>Bacillaceae</taxon>
        <taxon>Shouchella</taxon>
    </lineage>
</organism>
<keyword id="KW-1185">Reference proteome</keyword>
<keyword id="KW-0687">Ribonucleoprotein</keyword>
<keyword id="KW-0689">Ribosomal protein</keyword>
<keyword id="KW-0694">RNA-binding</keyword>
<keyword id="KW-0699">rRNA-binding</keyword>
<protein>
    <recommendedName>
        <fullName evidence="1">Large ribosomal subunit protein bL21</fullName>
    </recommendedName>
    <alternativeName>
        <fullName evidence="2">50S ribosomal protein L21</fullName>
    </alternativeName>
</protein>
<name>RL21_SHOC1</name>
<accession>Q5WES3</accession>
<feature type="chain" id="PRO_0000269279" description="Large ribosomal subunit protein bL21">
    <location>
        <begin position="1"/>
        <end position="102"/>
    </location>
</feature>
<evidence type="ECO:0000255" key="1">
    <source>
        <dbReference type="HAMAP-Rule" id="MF_01363"/>
    </source>
</evidence>
<evidence type="ECO:0000305" key="2"/>
<comment type="function">
    <text evidence="1">This protein binds to 23S rRNA in the presence of protein L20.</text>
</comment>
<comment type="subunit">
    <text evidence="1">Part of the 50S ribosomal subunit. Contacts protein L20.</text>
</comment>
<comment type="similarity">
    <text evidence="1">Belongs to the bacterial ribosomal protein bL21 family.</text>
</comment>
<proteinExistence type="inferred from homology"/>
<gene>
    <name evidence="1" type="primary">rplU</name>
    <name type="ordered locus">ABC2602</name>
</gene>
<sequence>MYAIIETGGKQIKVEEGQEIYVEKLDAEAGEEVSFDKVLFVGGESAKVGAPFVEGASVTGTVEKHGRNKKIIVYKMKAKKNYRRKQGHRQPYTKVVIGKING</sequence>
<dbReference type="EMBL" id="AP006627">
    <property type="protein sequence ID" value="BAD65137.1"/>
    <property type="molecule type" value="Genomic_DNA"/>
</dbReference>
<dbReference type="RefSeq" id="WP_011247445.1">
    <property type="nucleotide sequence ID" value="NC_006582.1"/>
</dbReference>
<dbReference type="SMR" id="Q5WES3"/>
<dbReference type="STRING" id="66692.ABC2602"/>
<dbReference type="GeneID" id="86926837"/>
<dbReference type="KEGG" id="bcl:ABC2602"/>
<dbReference type="eggNOG" id="COG0261">
    <property type="taxonomic scope" value="Bacteria"/>
</dbReference>
<dbReference type="HOGENOM" id="CLU_061463_3_2_9"/>
<dbReference type="OrthoDB" id="9813334at2"/>
<dbReference type="Proteomes" id="UP000001168">
    <property type="component" value="Chromosome"/>
</dbReference>
<dbReference type="GO" id="GO:0005737">
    <property type="term" value="C:cytoplasm"/>
    <property type="evidence" value="ECO:0007669"/>
    <property type="project" value="UniProtKB-ARBA"/>
</dbReference>
<dbReference type="GO" id="GO:1990904">
    <property type="term" value="C:ribonucleoprotein complex"/>
    <property type="evidence" value="ECO:0007669"/>
    <property type="project" value="UniProtKB-KW"/>
</dbReference>
<dbReference type="GO" id="GO:0005840">
    <property type="term" value="C:ribosome"/>
    <property type="evidence" value="ECO:0007669"/>
    <property type="project" value="UniProtKB-KW"/>
</dbReference>
<dbReference type="GO" id="GO:0019843">
    <property type="term" value="F:rRNA binding"/>
    <property type="evidence" value="ECO:0007669"/>
    <property type="project" value="UniProtKB-UniRule"/>
</dbReference>
<dbReference type="GO" id="GO:0003735">
    <property type="term" value="F:structural constituent of ribosome"/>
    <property type="evidence" value="ECO:0007669"/>
    <property type="project" value="InterPro"/>
</dbReference>
<dbReference type="GO" id="GO:0006412">
    <property type="term" value="P:translation"/>
    <property type="evidence" value="ECO:0007669"/>
    <property type="project" value="UniProtKB-UniRule"/>
</dbReference>
<dbReference type="HAMAP" id="MF_01363">
    <property type="entry name" value="Ribosomal_bL21"/>
    <property type="match status" value="1"/>
</dbReference>
<dbReference type="InterPro" id="IPR028909">
    <property type="entry name" value="bL21-like"/>
</dbReference>
<dbReference type="InterPro" id="IPR036164">
    <property type="entry name" value="bL21-like_sf"/>
</dbReference>
<dbReference type="InterPro" id="IPR001787">
    <property type="entry name" value="Ribosomal_bL21"/>
</dbReference>
<dbReference type="InterPro" id="IPR018258">
    <property type="entry name" value="Ribosomal_bL21_CS"/>
</dbReference>
<dbReference type="NCBIfam" id="TIGR00061">
    <property type="entry name" value="L21"/>
    <property type="match status" value="1"/>
</dbReference>
<dbReference type="PANTHER" id="PTHR21349">
    <property type="entry name" value="50S RIBOSOMAL PROTEIN L21"/>
    <property type="match status" value="1"/>
</dbReference>
<dbReference type="PANTHER" id="PTHR21349:SF0">
    <property type="entry name" value="LARGE RIBOSOMAL SUBUNIT PROTEIN BL21M"/>
    <property type="match status" value="1"/>
</dbReference>
<dbReference type="Pfam" id="PF00829">
    <property type="entry name" value="Ribosomal_L21p"/>
    <property type="match status" value="1"/>
</dbReference>
<dbReference type="SUPFAM" id="SSF141091">
    <property type="entry name" value="L21p-like"/>
    <property type="match status" value="1"/>
</dbReference>
<dbReference type="PROSITE" id="PS01169">
    <property type="entry name" value="RIBOSOMAL_L21"/>
    <property type="match status" value="1"/>
</dbReference>
<reference key="1">
    <citation type="submission" date="2003-10" db="EMBL/GenBank/DDBJ databases">
        <title>The complete genome sequence of the alkaliphilic Bacillus clausii KSM-K16.</title>
        <authorList>
            <person name="Takaki Y."/>
            <person name="Kageyama Y."/>
            <person name="Shimamura S."/>
            <person name="Suzuki H."/>
            <person name="Nishi S."/>
            <person name="Hatada Y."/>
            <person name="Kawai S."/>
            <person name="Ito S."/>
            <person name="Horikoshi K."/>
        </authorList>
    </citation>
    <scope>NUCLEOTIDE SEQUENCE [LARGE SCALE GENOMIC DNA]</scope>
    <source>
        <strain>KSM-K16</strain>
    </source>
</reference>